<proteinExistence type="inferred from homology"/>
<reference key="1">
    <citation type="journal article" date="2008" name="Proc. Natl. Acad. Sci. U.S.A.">
        <title>The genome of Cyanothece 51142, a unicellular diazotrophic cyanobacterium important in the marine nitrogen cycle.</title>
        <authorList>
            <person name="Welsh E.A."/>
            <person name="Liberton M."/>
            <person name="Stoeckel J."/>
            <person name="Loh T."/>
            <person name="Elvitigala T."/>
            <person name="Wang C."/>
            <person name="Wollam A."/>
            <person name="Fulton R.S."/>
            <person name="Clifton S.W."/>
            <person name="Jacobs J.M."/>
            <person name="Aurora R."/>
            <person name="Ghosh B.K."/>
            <person name="Sherman L.A."/>
            <person name="Smith R.D."/>
            <person name="Wilson R.K."/>
            <person name="Pakrasi H.B."/>
        </authorList>
    </citation>
    <scope>NUCLEOTIDE SEQUENCE [LARGE SCALE GENOMIC DNA]</scope>
    <source>
        <strain>ATCC 51142 / BH68</strain>
    </source>
</reference>
<feature type="chain" id="PRO_0000355749" description="Ribulose bisphosphate carboxylase large chain">
    <location>
        <begin position="1"/>
        <end position="471"/>
    </location>
</feature>
<feature type="active site" description="Proton acceptor" evidence="1">
    <location>
        <position position="171"/>
    </location>
</feature>
<feature type="active site" description="Proton acceptor" evidence="1">
    <location>
        <position position="290"/>
    </location>
</feature>
<feature type="binding site" description="in homodimeric partner" evidence="1">
    <location>
        <position position="119"/>
    </location>
    <ligand>
        <name>substrate</name>
    </ligand>
</feature>
<feature type="binding site" evidence="1">
    <location>
        <position position="169"/>
    </location>
    <ligand>
        <name>substrate</name>
    </ligand>
</feature>
<feature type="binding site" evidence="1">
    <location>
        <position position="173"/>
    </location>
    <ligand>
        <name>substrate</name>
    </ligand>
</feature>
<feature type="binding site" description="via carbamate group" evidence="1">
    <location>
        <position position="197"/>
    </location>
    <ligand>
        <name>Mg(2+)</name>
        <dbReference type="ChEBI" id="CHEBI:18420"/>
    </ligand>
</feature>
<feature type="binding site" evidence="1">
    <location>
        <position position="199"/>
    </location>
    <ligand>
        <name>Mg(2+)</name>
        <dbReference type="ChEBI" id="CHEBI:18420"/>
    </ligand>
</feature>
<feature type="binding site" evidence="1">
    <location>
        <position position="200"/>
    </location>
    <ligand>
        <name>Mg(2+)</name>
        <dbReference type="ChEBI" id="CHEBI:18420"/>
    </ligand>
</feature>
<feature type="binding site" evidence="1">
    <location>
        <position position="291"/>
    </location>
    <ligand>
        <name>substrate</name>
    </ligand>
</feature>
<feature type="binding site" evidence="1">
    <location>
        <position position="323"/>
    </location>
    <ligand>
        <name>substrate</name>
    </ligand>
</feature>
<feature type="binding site" evidence="1">
    <location>
        <position position="375"/>
    </location>
    <ligand>
        <name>substrate</name>
    </ligand>
</feature>
<feature type="site" description="Transition state stabilizer" evidence="1">
    <location>
        <position position="330"/>
    </location>
</feature>
<feature type="modified residue" description="N6-carboxylysine" evidence="1">
    <location>
        <position position="197"/>
    </location>
</feature>
<feature type="disulfide bond" description="Interchain; in linked form" evidence="1">
    <location>
        <position position="243"/>
    </location>
</feature>
<evidence type="ECO:0000255" key="1">
    <source>
        <dbReference type="HAMAP-Rule" id="MF_01338"/>
    </source>
</evidence>
<dbReference type="EC" id="4.1.1.39" evidence="1"/>
<dbReference type="EMBL" id="CP000806">
    <property type="protein sequence ID" value="ACB52514.1"/>
    <property type="molecule type" value="Genomic_DNA"/>
</dbReference>
<dbReference type="RefSeq" id="WP_009547487.1">
    <property type="nucleotide sequence ID" value="NC_010546.1"/>
</dbReference>
<dbReference type="SMR" id="B1WXH3"/>
<dbReference type="STRING" id="43989.cce_3166"/>
<dbReference type="KEGG" id="cyt:cce_3166"/>
<dbReference type="eggNOG" id="COG1850">
    <property type="taxonomic scope" value="Bacteria"/>
</dbReference>
<dbReference type="HOGENOM" id="CLU_031450_2_0_3"/>
<dbReference type="OrthoDB" id="9770811at2"/>
<dbReference type="Proteomes" id="UP000001203">
    <property type="component" value="Chromosome circular"/>
</dbReference>
<dbReference type="GO" id="GO:0031470">
    <property type="term" value="C:carboxysome"/>
    <property type="evidence" value="ECO:0007669"/>
    <property type="project" value="UniProtKB-SubCell"/>
</dbReference>
<dbReference type="GO" id="GO:0000287">
    <property type="term" value="F:magnesium ion binding"/>
    <property type="evidence" value="ECO:0007669"/>
    <property type="project" value="UniProtKB-UniRule"/>
</dbReference>
<dbReference type="GO" id="GO:0004497">
    <property type="term" value="F:monooxygenase activity"/>
    <property type="evidence" value="ECO:0007669"/>
    <property type="project" value="UniProtKB-KW"/>
</dbReference>
<dbReference type="GO" id="GO:0016984">
    <property type="term" value="F:ribulose-bisphosphate carboxylase activity"/>
    <property type="evidence" value="ECO:0007669"/>
    <property type="project" value="UniProtKB-UniRule"/>
</dbReference>
<dbReference type="GO" id="GO:0009853">
    <property type="term" value="P:photorespiration"/>
    <property type="evidence" value="ECO:0007669"/>
    <property type="project" value="UniProtKB-KW"/>
</dbReference>
<dbReference type="GO" id="GO:0019253">
    <property type="term" value="P:reductive pentose-phosphate cycle"/>
    <property type="evidence" value="ECO:0007669"/>
    <property type="project" value="UniProtKB-UniRule"/>
</dbReference>
<dbReference type="CDD" id="cd08212">
    <property type="entry name" value="RuBisCO_large_I"/>
    <property type="match status" value="1"/>
</dbReference>
<dbReference type="Gene3D" id="3.20.20.110">
    <property type="entry name" value="Ribulose bisphosphate carboxylase, large subunit, C-terminal domain"/>
    <property type="match status" value="1"/>
</dbReference>
<dbReference type="Gene3D" id="3.30.70.150">
    <property type="entry name" value="RuBisCO large subunit, N-terminal domain"/>
    <property type="match status" value="1"/>
</dbReference>
<dbReference type="HAMAP" id="MF_01338">
    <property type="entry name" value="RuBisCO_L_type1"/>
    <property type="match status" value="1"/>
</dbReference>
<dbReference type="InterPro" id="IPR033966">
    <property type="entry name" value="RuBisCO"/>
</dbReference>
<dbReference type="InterPro" id="IPR020878">
    <property type="entry name" value="RuBisCo_large_chain_AS"/>
</dbReference>
<dbReference type="InterPro" id="IPR000685">
    <property type="entry name" value="RuBisCO_lsu_C"/>
</dbReference>
<dbReference type="InterPro" id="IPR036376">
    <property type="entry name" value="RuBisCO_lsu_C_sf"/>
</dbReference>
<dbReference type="InterPro" id="IPR017443">
    <property type="entry name" value="RuBisCO_lsu_fd_N"/>
</dbReference>
<dbReference type="InterPro" id="IPR036422">
    <property type="entry name" value="RuBisCO_lsu_N_sf"/>
</dbReference>
<dbReference type="InterPro" id="IPR020888">
    <property type="entry name" value="RuBisCO_lsuI"/>
</dbReference>
<dbReference type="NCBIfam" id="NF003252">
    <property type="entry name" value="PRK04208.1"/>
    <property type="match status" value="1"/>
</dbReference>
<dbReference type="PANTHER" id="PTHR42704">
    <property type="entry name" value="RIBULOSE BISPHOSPHATE CARBOXYLASE"/>
    <property type="match status" value="1"/>
</dbReference>
<dbReference type="PANTHER" id="PTHR42704:SF17">
    <property type="entry name" value="RIBULOSE BISPHOSPHATE CARBOXYLASE LARGE CHAIN"/>
    <property type="match status" value="1"/>
</dbReference>
<dbReference type="Pfam" id="PF00016">
    <property type="entry name" value="RuBisCO_large"/>
    <property type="match status" value="1"/>
</dbReference>
<dbReference type="Pfam" id="PF02788">
    <property type="entry name" value="RuBisCO_large_N"/>
    <property type="match status" value="1"/>
</dbReference>
<dbReference type="SFLD" id="SFLDG01052">
    <property type="entry name" value="RuBisCO"/>
    <property type="match status" value="1"/>
</dbReference>
<dbReference type="SFLD" id="SFLDS00014">
    <property type="entry name" value="RuBisCO"/>
    <property type="match status" value="1"/>
</dbReference>
<dbReference type="SFLD" id="SFLDG00301">
    <property type="entry name" value="RuBisCO-like_proteins"/>
    <property type="match status" value="1"/>
</dbReference>
<dbReference type="SUPFAM" id="SSF51649">
    <property type="entry name" value="RuBisCo, C-terminal domain"/>
    <property type="match status" value="1"/>
</dbReference>
<dbReference type="SUPFAM" id="SSF54966">
    <property type="entry name" value="RuBisCO, large subunit, small (N-terminal) domain"/>
    <property type="match status" value="1"/>
</dbReference>
<dbReference type="PROSITE" id="PS00157">
    <property type="entry name" value="RUBISCO_LARGE"/>
    <property type="match status" value="1"/>
</dbReference>
<comment type="function">
    <text evidence="1">RuBisCO catalyzes two reactions: the carboxylation of D-ribulose 1,5-bisphosphate, the primary event in carbon dioxide fixation, as well as the oxidative fragmentation of the pentose substrate in the photorespiration process. Both reactions occur simultaneously and in competition at the same active site.</text>
</comment>
<comment type="catalytic activity">
    <reaction evidence="1">
        <text>2 (2R)-3-phosphoglycerate + 2 H(+) = D-ribulose 1,5-bisphosphate + CO2 + H2O</text>
        <dbReference type="Rhea" id="RHEA:23124"/>
        <dbReference type="ChEBI" id="CHEBI:15377"/>
        <dbReference type="ChEBI" id="CHEBI:15378"/>
        <dbReference type="ChEBI" id="CHEBI:16526"/>
        <dbReference type="ChEBI" id="CHEBI:57870"/>
        <dbReference type="ChEBI" id="CHEBI:58272"/>
        <dbReference type="EC" id="4.1.1.39"/>
    </reaction>
</comment>
<comment type="catalytic activity">
    <reaction evidence="1">
        <text>D-ribulose 1,5-bisphosphate + O2 = 2-phosphoglycolate + (2R)-3-phosphoglycerate + 2 H(+)</text>
        <dbReference type="Rhea" id="RHEA:36631"/>
        <dbReference type="ChEBI" id="CHEBI:15378"/>
        <dbReference type="ChEBI" id="CHEBI:15379"/>
        <dbReference type="ChEBI" id="CHEBI:57870"/>
        <dbReference type="ChEBI" id="CHEBI:58033"/>
        <dbReference type="ChEBI" id="CHEBI:58272"/>
    </reaction>
</comment>
<comment type="cofactor">
    <cofactor evidence="1">
        <name>Mg(2+)</name>
        <dbReference type="ChEBI" id="CHEBI:18420"/>
    </cofactor>
    <text evidence="1">Binds 1 Mg(2+) ion per subunit.</text>
</comment>
<comment type="subunit">
    <text evidence="1">Heterohexadecamer of 8 large chains and 8 small chains; disulfide-linked. The disulfide link is formed within the large subunit homodimers.</text>
</comment>
<comment type="subcellular location">
    <subcellularLocation>
        <location evidence="1">Carboxysome</location>
    </subcellularLocation>
</comment>
<comment type="PTM">
    <text evidence="1">The disulfide bond which can form in the large chain dimeric partners within the hexadecamer appears to be associated with oxidative stress and protein turnover.</text>
</comment>
<comment type="miscellaneous">
    <text evidence="1">The basic functional RuBisCO is composed of a large chain homodimer in a 'head-to-tail' conformation. In form I RuBisCO this homodimer is arranged in a barrel-like tetramer with the small subunits forming a tetrameric 'cap' on each end of the 'barrel'.</text>
</comment>
<comment type="similarity">
    <text evidence="1">Belongs to the RuBisCO large chain family. Type I subfamily.</text>
</comment>
<gene>
    <name evidence="1" type="primary">cbbL</name>
    <name evidence="1" type="synonym">rbcL</name>
    <name type="ordered locus">cce_3166</name>
</gene>
<name>RBL_CROS5</name>
<accession>B1WXH3</accession>
<sequence length="471" mass="52462">MAQATKSGFNAGVQDYRLTYYTPDYTPKDTDLLACFRMTPQPGVPPEEAGAAVAAESSTGTWTTVWTDNLTDLDRYKGRCYDIEPVPNEDNQYFCFIAYPLDLFEEGSVTNVLTSLVGNVFGFKALRALRLEDIRFPVALIKTFQGPPHGITVERDKLNKYGRPLLGCTIKPKLGLSAKNYGRAVYECLRGGLDFTKDDENINSQPFMRWRDRFLFVQEAIEKAQAETNEVKGHYLNVTAGTCEEMMKRAEFAKEIGTPIVMHDFLTGGFTANTTLAKFCRDNGILLHIHRAMHAVIDRQKNHGIHFRVLAKCLRLSGGDHLHSGTVVGKLEGERGITMGFVDLMREDYVEEDRSRGIFFTQDYASMPGTMPVASGGIHVWHMPALVEIFGDDSCLQFGGGTLGHPWGNAPGATANRVALEACIQARNEGRNLAREGNDVIREACKWSPELAAACELWKEITFEFEAMDTL</sequence>
<protein>
    <recommendedName>
        <fullName evidence="1">Ribulose bisphosphate carboxylase large chain</fullName>
        <shortName evidence="1">RuBisCO large subunit</shortName>
        <ecNumber evidence="1">4.1.1.39</ecNumber>
    </recommendedName>
</protein>
<keyword id="KW-1283">Bacterial microcompartment</keyword>
<keyword id="KW-0113">Calvin cycle</keyword>
<keyword id="KW-0120">Carbon dioxide fixation</keyword>
<keyword id="KW-1282">Carboxysome</keyword>
<keyword id="KW-1015">Disulfide bond</keyword>
<keyword id="KW-0456">Lyase</keyword>
<keyword id="KW-0460">Magnesium</keyword>
<keyword id="KW-0479">Metal-binding</keyword>
<keyword id="KW-0503">Monooxygenase</keyword>
<keyword id="KW-0560">Oxidoreductase</keyword>
<keyword id="KW-0601">Photorespiration</keyword>
<keyword id="KW-0602">Photosynthesis</keyword>
<keyword id="KW-1185">Reference proteome</keyword>
<organism>
    <name type="scientific">Crocosphaera subtropica (strain ATCC 51142 / BH68)</name>
    <name type="common">Cyanothece sp. (strain ATCC 51142)</name>
    <dbReference type="NCBI Taxonomy" id="43989"/>
    <lineage>
        <taxon>Bacteria</taxon>
        <taxon>Bacillati</taxon>
        <taxon>Cyanobacteriota</taxon>
        <taxon>Cyanophyceae</taxon>
        <taxon>Oscillatoriophycideae</taxon>
        <taxon>Chroococcales</taxon>
        <taxon>Aphanothecaceae</taxon>
        <taxon>Crocosphaera</taxon>
        <taxon>Crocosphaera subtropica</taxon>
    </lineage>
</organism>